<proteinExistence type="evidence at protein level"/>
<evidence type="ECO:0000250" key="1">
    <source>
        <dbReference type="UniProtKB" id="P08799"/>
    </source>
</evidence>
<evidence type="ECO:0000250" key="2">
    <source>
        <dbReference type="UniProtKB" id="P97479"/>
    </source>
</evidence>
<evidence type="ECO:0000250" key="3">
    <source>
        <dbReference type="UniProtKB" id="Q13402"/>
    </source>
</evidence>
<evidence type="ECO:0000255" key="4"/>
<evidence type="ECO:0000255" key="5">
    <source>
        <dbReference type="PROSITE-ProRule" id="PRU00084"/>
    </source>
</evidence>
<evidence type="ECO:0000255" key="6">
    <source>
        <dbReference type="PROSITE-ProRule" id="PRU00116"/>
    </source>
</evidence>
<evidence type="ECO:0000255" key="7">
    <source>
        <dbReference type="PROSITE-ProRule" id="PRU00192"/>
    </source>
</evidence>
<evidence type="ECO:0000255" key="8">
    <source>
        <dbReference type="PROSITE-ProRule" id="PRU00359"/>
    </source>
</evidence>
<evidence type="ECO:0000255" key="9">
    <source>
        <dbReference type="PROSITE-ProRule" id="PRU00782"/>
    </source>
</evidence>
<evidence type="ECO:0000256" key="10">
    <source>
        <dbReference type="SAM" id="MobiDB-lite"/>
    </source>
</evidence>
<evidence type="ECO:0000269" key="11">
    <source>
    </source>
</evidence>
<evidence type="ECO:0000303" key="12">
    <source>
    </source>
</evidence>
<evidence type="ECO:0000305" key="13"/>
<sequence>MVLVSKGDFIWIEPGKTEGSIPIGARVIDQDHGRLKVIDDLGNEQWLSADRRVRLMHPTSVQGVEDMCQLGDFHESAILRNLFIRYREKLIYAYTGSILIAVNPYMDIAIYTADEIRMYKRKRIGELPPHIFAIADNAYTNMRREKKNQSVIISGESGAGKTESTKLVLQFLATISGQHSWIEQQVLEANPVLEAFGNAKTIRNDNSSRFGKYIDVHFNESGSIEGAKIEQYLLEKSRIVTQSENERNYHIFYCLLAGLSREEKSELELGTAADYYYLIQGKTLTAEGRDDAADLAEIRSAMRVLMINEQEIGSIFKLLASLLHIGNIRFRQNTNDNMESVDVADPSTLVRIAKLLQLHEQNLLDAITTKSLVTREERVISRLNGQQAVDARDALAKAIYGKLFIHIVRRVNDAIYKPSQSRRTSIGILDIFGFENFESNSFEQLCINFANETLQQFFVHHVFKMEQKEYDEEHINWRHIKFVDNQATVDLIAQRPLNILSLIDEESIFPKGTDKTMLLKLHSTHGRNELYLQPKSELQRAFGVTHFAGNVFYNTRGFLEKNRDSFSADLSVLISSSKMPFLARLFDDIEYDTSSRKKVTVGNQFRRSLEQLMSQLTQTHPFFIRCIKPNEMKRALVMDRDLVLRQLRYSGMMETIKIRRSGYPIRHDYYPFVFRYRVLVSSIQGPVNRIDLHDAAKKICHMILGTNADYQLGKTKVFLKDKHDLVLEQEYYRILKDKAIVIQKNVRRWLVRKDFEKQRQAAVTIQTAWRGFDQRKRYRQIISGFSRLQAVLRSRQLVSHYQTLRKTIIQFQAVCRGSLVRRQVGEKRKRGEKAPLTEVSSTASVISDSHEELVGHLFDFLPSDGKDSGNENDSADSSRRGSYSRLHTSPVMPPANIPRVDSYVDEDLSKYQFGKYAATFFQAQATATHVKKPLKTALLTHTEPSAQLAALTAWTTILRFMGDLADVKPGSTNGSEVYDKTPVMIKLYATLGKKFSAHDLEEAMLSSEYGGAKTLKKGMGRKLISMTLKRKGKINGSDTSSISSDSVYSSFNAMLENKPMTSLDKLHYIIGLGILREDLRDEIYCQLCKQLSNNPSKLSAARGWILLSLCVGCFAPSERFIKYLFCFIRERGPAGTGYSKYIEDRLRRTQVNGTRHQPPSYVELQANKSQKPVVLAVTFMDGSVKTLCADSATTAAELCKQLAEKVGLTNSFGFSLYIALFDKVSSLGSGTDHVMDAISQCEQYAKEQGRQERNAPWRLFFRKEIFSPWHDPRDDPVSTNLIYQQVIRGIKYGEYRCDKDEELAAICAQQYYIDEGTMDVNKLENNLPSYLPDFEMSGKEMALEKWTQTIMHQYRKKFTGRLPSQIEVKENVVSVAKTKWPLLFSRFYEALKFAGPPLPKNEVIIAVNWTGVYVVDDREHVMLEFSFPEISTAYYGKGKRSTTDTCTVRTVVGDEYTFQSPNADDITNLIVMFLEGLKKRSRYLVAIKSQKGDEKNNFLEFEKGDLLILVNEFTGNTLLTESVVKGENSRTCLFGLIRAENVYVLPTLVKPSKNTLQIFPKDMDLSLDLFNNNKQVTVVDYNAEPYTLENFAEDNFNSQVKRVGSQISLMTLRKKESQIECWRFSREHIDQPLLKKLNGREDACRGAIEIFAAIMKYMGDEPSKRSRLGTHLTDHIFKLPISMEALRDELYCQLVKQLTLNPSIMSEERGWELLWMATGLFAPSAALAKEISHFLKSRPHPIALDCQNRMQKLAKGGSRKYPPHLVEVEAIQHKTTQIFHKVFFPDNTDEAIEVDSATRARDFCHKIGYRLGLKSSDGFSLFVKIKDKVLAVPESEFFFDYVRSLSDWVHTNHATQKDATMIPINYQVYFMRKLWYNFVAGADPQADIIFHYHQESQKYLLGYHKTTKNDVIELAALILRSMTKDGKNAPLAQIPQLLDEIIPKDSLKMYSASEWRKTISNAYARIEHLKSDQAKIEFLNYICRWPTFGSAFFPVSQYSDLNLPDRLLLAINQTGVNIYHLDTKNLLVQYPFNVICNWTSGNTYFNMTVGNMLKGNEGKKLLLDTTVGYKMDDLLTSYISLLISNQNNHPSKTREVAL</sequence>
<reference key="1">
    <citation type="journal article" date="1998" name="Science">
        <title>Genome sequence of the nematode C. elegans: a platform for investigating biology.</title>
        <authorList>
            <consortium name="The C. elegans sequencing consortium"/>
        </authorList>
    </citation>
    <scope>NUCLEOTIDE SEQUENCE [LARGE SCALE GENOMIC DNA]</scope>
    <source>
        <strain>Bristol N2</strain>
    </source>
</reference>
<reference evidence="13" key="2">
    <citation type="journal article" date="1997" name="J. Mol. Biol.">
        <title>A family of unconventional myosins from the nematode Caenorhabditis elegans.</title>
        <authorList>
            <person name="Baker J.P."/>
            <person name="Titus M.A."/>
        </authorList>
    </citation>
    <scope>IDENTIFICATION</scope>
</reference>
<reference evidence="13" key="3">
    <citation type="journal article" date="2000" name="Hum. Mol. Genet.">
        <title>A role for Caenorhabditis elegans in understanding the function and interactions of human disease genes.</title>
        <authorList>
            <person name="Culetto E."/>
            <person name="Sattelle D.B."/>
        </authorList>
    </citation>
    <scope>IDENTIFICATION</scope>
</reference>
<reference evidence="13" key="4">
    <citation type="journal article" date="2003" name="Mol. Biol. Cell">
        <title>Caenorhabditis elegans UNC-98, a C2H2 Zn finger protein, is a novel partner of UNC-97/PINCH in muscle adhesion complexes.</title>
        <authorList>
            <person name="Mercer K.B."/>
            <person name="Flaherty D.B."/>
            <person name="Miller R.K."/>
            <person name="Qadota H."/>
            <person name="Tinley T.L."/>
            <person name="Moerman D.G."/>
            <person name="Benian G.M."/>
        </authorList>
    </citation>
    <scope>INTERACTION WITH UNC-98</scope>
</reference>
<comment type="function">
    <text evidence="2">Myosins are actin-based motor molecules with ATPase activity. Unconventional myosins serve in intracellular movements. Their highly divergent tails are presumed to bind to membranous compartments, which would be moved relative to actin filaments (By similarity).</text>
</comment>
<comment type="subunit">
    <text evidence="11">Interacts with unc-98.</text>
</comment>
<comment type="subcellular location">
    <subcellularLocation>
        <location evidence="3">Cytoplasm</location>
    </subcellularLocation>
</comment>
<comment type="similarity">
    <text evidence="13">Belongs to the TRAFAC class myosin-kinesin ATPase superfamily. Myosin family.</text>
</comment>
<organism>
    <name type="scientific">Caenorhabditis elegans</name>
    <dbReference type="NCBI Taxonomy" id="6239"/>
    <lineage>
        <taxon>Eukaryota</taxon>
        <taxon>Metazoa</taxon>
        <taxon>Ecdysozoa</taxon>
        <taxon>Nematoda</taxon>
        <taxon>Chromadorea</taxon>
        <taxon>Rhabditida</taxon>
        <taxon>Rhabditina</taxon>
        <taxon>Rhabditomorpha</taxon>
        <taxon>Rhabditoidea</taxon>
        <taxon>Rhabditidae</taxon>
        <taxon>Peloderinae</taxon>
        <taxon>Caenorhabditis</taxon>
    </lineage>
</organism>
<gene>
    <name evidence="12" type="primary">hum-6</name>
    <name type="ORF">T10H10.1</name>
</gene>
<dbReference type="EMBL" id="FO080098">
    <property type="protein sequence ID" value="CCD61190.1"/>
    <property type="molecule type" value="Genomic_DNA"/>
</dbReference>
<dbReference type="PIR" id="T25888">
    <property type="entry name" value="T25888"/>
</dbReference>
<dbReference type="RefSeq" id="NP_508420.1">
    <property type="nucleotide sequence ID" value="NM_076019.6"/>
</dbReference>
<dbReference type="SMR" id="P91443"/>
<dbReference type="BioGRID" id="45484">
    <property type="interactions" value="4"/>
</dbReference>
<dbReference type="FunCoup" id="P91443">
    <property type="interactions" value="416"/>
</dbReference>
<dbReference type="IntAct" id="P91443">
    <property type="interactions" value="1"/>
</dbReference>
<dbReference type="MINT" id="P91443"/>
<dbReference type="STRING" id="6239.T10H10.1.1"/>
<dbReference type="iPTMnet" id="P91443"/>
<dbReference type="PaxDb" id="6239-T10H10.1"/>
<dbReference type="PeptideAtlas" id="P91443"/>
<dbReference type="EnsemblMetazoa" id="T10H10.1.1">
    <property type="protein sequence ID" value="T10H10.1.1"/>
    <property type="gene ID" value="WBGene00002039"/>
</dbReference>
<dbReference type="GeneID" id="180539"/>
<dbReference type="KEGG" id="cel:CELE_T10H10.1"/>
<dbReference type="UCSC" id="T10H10.1">
    <property type="organism name" value="c. elegans"/>
</dbReference>
<dbReference type="AGR" id="WB:WBGene00002039"/>
<dbReference type="CTD" id="180539"/>
<dbReference type="WormBase" id="T10H10.1">
    <property type="protein sequence ID" value="CE13575"/>
    <property type="gene ID" value="WBGene00002039"/>
    <property type="gene designation" value="hum-6"/>
</dbReference>
<dbReference type="eggNOG" id="KOG4229">
    <property type="taxonomic scope" value="Eukaryota"/>
</dbReference>
<dbReference type="GeneTree" id="ENSGT00940000157247"/>
<dbReference type="HOGENOM" id="CLU_000192_14_1_1"/>
<dbReference type="InParanoid" id="P91443"/>
<dbReference type="OMA" id="TGFQGRC"/>
<dbReference type="OrthoDB" id="6108017at2759"/>
<dbReference type="PhylomeDB" id="P91443"/>
<dbReference type="Reactome" id="R-CEL-2453902">
    <property type="pathway name" value="The canonical retinoid cycle in rods (twilight vision)"/>
</dbReference>
<dbReference type="PRO" id="PR:P91443"/>
<dbReference type="Proteomes" id="UP000001940">
    <property type="component" value="Chromosome X"/>
</dbReference>
<dbReference type="Bgee" id="WBGene00002039">
    <property type="expression patterns" value="Expressed in pharyngeal muscle cell (C elegans) and 3 other cell types or tissues"/>
</dbReference>
<dbReference type="GO" id="GO:0015629">
    <property type="term" value="C:actin cytoskeleton"/>
    <property type="evidence" value="ECO:0000318"/>
    <property type="project" value="GO_Central"/>
</dbReference>
<dbReference type="GO" id="GO:0005737">
    <property type="term" value="C:cytoplasm"/>
    <property type="evidence" value="ECO:0000318"/>
    <property type="project" value="GO_Central"/>
</dbReference>
<dbReference type="GO" id="GO:0016020">
    <property type="term" value="C:membrane"/>
    <property type="evidence" value="ECO:0000318"/>
    <property type="project" value="GO_Central"/>
</dbReference>
<dbReference type="GO" id="GO:0005902">
    <property type="term" value="C:microvillus"/>
    <property type="evidence" value="ECO:0000318"/>
    <property type="project" value="GO_Central"/>
</dbReference>
<dbReference type="GO" id="GO:0031476">
    <property type="term" value="C:myosin VI complex"/>
    <property type="evidence" value="ECO:0000304"/>
    <property type="project" value="UniProtKB"/>
</dbReference>
<dbReference type="GO" id="GO:0051015">
    <property type="term" value="F:actin filament binding"/>
    <property type="evidence" value="ECO:0000318"/>
    <property type="project" value="GO_Central"/>
</dbReference>
<dbReference type="GO" id="GO:0005524">
    <property type="term" value="F:ATP binding"/>
    <property type="evidence" value="ECO:0007669"/>
    <property type="project" value="UniProtKB-KW"/>
</dbReference>
<dbReference type="GO" id="GO:0000146">
    <property type="term" value="F:microfilament motor activity"/>
    <property type="evidence" value="ECO:0000318"/>
    <property type="project" value="GO_Central"/>
</dbReference>
<dbReference type="GO" id="GO:0007015">
    <property type="term" value="P:actin filament organization"/>
    <property type="evidence" value="ECO:0000318"/>
    <property type="project" value="GO_Central"/>
</dbReference>
<dbReference type="GO" id="GO:0030048">
    <property type="term" value="P:actin filament-based movement"/>
    <property type="evidence" value="ECO:0000318"/>
    <property type="project" value="GO_Central"/>
</dbReference>
<dbReference type="GO" id="GO:0007605">
    <property type="term" value="P:sensory perception of sound"/>
    <property type="evidence" value="ECO:0000318"/>
    <property type="project" value="GO_Central"/>
</dbReference>
<dbReference type="CDD" id="cd17092">
    <property type="entry name" value="FERM1_F1_Myosin-VII"/>
    <property type="match status" value="1"/>
</dbReference>
<dbReference type="CDD" id="cd17093">
    <property type="entry name" value="FERM2_F1_Myosin-VII"/>
    <property type="match status" value="1"/>
</dbReference>
<dbReference type="CDD" id="cd14473">
    <property type="entry name" value="FERM_B-lobe"/>
    <property type="match status" value="2"/>
</dbReference>
<dbReference type="CDD" id="cd13198">
    <property type="entry name" value="FERM_C1_MyoVII"/>
    <property type="match status" value="1"/>
</dbReference>
<dbReference type="CDD" id="cd13199">
    <property type="entry name" value="FERM_C2_MyoVII"/>
    <property type="match status" value="1"/>
</dbReference>
<dbReference type="CDD" id="cd01381">
    <property type="entry name" value="MYSc_Myo7"/>
    <property type="match status" value="1"/>
</dbReference>
<dbReference type="FunFam" id="1.10.10.820:FF:000001">
    <property type="entry name" value="Myosin heavy chain"/>
    <property type="match status" value="1"/>
</dbReference>
<dbReference type="FunFam" id="1.20.80.10:FF:000013">
    <property type="entry name" value="Unconventional myosin-VIIa"/>
    <property type="match status" value="1"/>
</dbReference>
<dbReference type="FunFam" id="3.10.20.90:FF:000036">
    <property type="entry name" value="Unconventional myosin-VIIa"/>
    <property type="match status" value="1"/>
</dbReference>
<dbReference type="FunFam" id="2.30.29.30:FF:000075">
    <property type="entry name" value="unconventional myosin-VIIa"/>
    <property type="match status" value="1"/>
</dbReference>
<dbReference type="Gene3D" id="1.10.10.820">
    <property type="match status" value="1"/>
</dbReference>
<dbReference type="Gene3D" id="1.20.5.190">
    <property type="match status" value="1"/>
</dbReference>
<dbReference type="Gene3D" id="1.20.58.530">
    <property type="match status" value="1"/>
</dbReference>
<dbReference type="Gene3D" id="1.20.80.10">
    <property type="match status" value="2"/>
</dbReference>
<dbReference type="Gene3D" id="6.20.240.20">
    <property type="match status" value="1"/>
</dbReference>
<dbReference type="Gene3D" id="3.40.850.10">
    <property type="entry name" value="Kinesin motor domain"/>
    <property type="match status" value="1"/>
</dbReference>
<dbReference type="Gene3D" id="1.20.120.720">
    <property type="entry name" value="Myosin VI head, motor domain, U50 subdomain"/>
    <property type="match status" value="1"/>
</dbReference>
<dbReference type="Gene3D" id="1.25.40.530">
    <property type="entry name" value="MyTH4 domain"/>
    <property type="match status" value="3"/>
</dbReference>
<dbReference type="Gene3D" id="3.10.20.90">
    <property type="entry name" value="Phosphatidylinositol 3-kinase Catalytic Subunit, Chain A, domain 1"/>
    <property type="match status" value="2"/>
</dbReference>
<dbReference type="Gene3D" id="2.30.29.30">
    <property type="entry name" value="Pleckstrin-homology domain (PH domain)/Phosphotyrosine-binding domain (PTB)"/>
    <property type="match status" value="2"/>
</dbReference>
<dbReference type="Gene3D" id="2.30.30.40">
    <property type="entry name" value="SH3 Domains"/>
    <property type="match status" value="1"/>
</dbReference>
<dbReference type="InterPro" id="IPR019749">
    <property type="entry name" value="Band_41_domain"/>
</dbReference>
<dbReference type="InterPro" id="IPR014352">
    <property type="entry name" value="FERM/acyl-CoA-bd_prot_sf"/>
</dbReference>
<dbReference type="InterPro" id="IPR035963">
    <property type="entry name" value="FERM_2"/>
</dbReference>
<dbReference type="InterPro" id="IPR019748">
    <property type="entry name" value="FERM_central"/>
</dbReference>
<dbReference type="InterPro" id="IPR000299">
    <property type="entry name" value="FERM_domain"/>
</dbReference>
<dbReference type="InterPro" id="IPR000048">
    <property type="entry name" value="IQ_motif_EF-hand-BS"/>
</dbReference>
<dbReference type="InterPro" id="IPR002404">
    <property type="entry name" value="IRS_PTB"/>
</dbReference>
<dbReference type="InterPro" id="IPR036961">
    <property type="entry name" value="Kinesin_motor_dom_sf"/>
</dbReference>
<dbReference type="InterPro" id="IPR001609">
    <property type="entry name" value="Myosin_head_motor_dom-like"/>
</dbReference>
<dbReference type="InterPro" id="IPR041793">
    <property type="entry name" value="MyoVII_FERM_C1"/>
</dbReference>
<dbReference type="InterPro" id="IPR041794">
    <property type="entry name" value="MyoVII_FERM_C2"/>
</dbReference>
<dbReference type="InterPro" id="IPR036106">
    <property type="entry name" value="MYSc_Myo7"/>
</dbReference>
<dbReference type="InterPro" id="IPR000857">
    <property type="entry name" value="MyTH4_dom"/>
</dbReference>
<dbReference type="InterPro" id="IPR038185">
    <property type="entry name" value="MyTH4_dom_sf"/>
</dbReference>
<dbReference type="InterPro" id="IPR027417">
    <property type="entry name" value="P-loop_NTPase"/>
</dbReference>
<dbReference type="InterPro" id="IPR011993">
    <property type="entry name" value="PH-like_dom_sf"/>
</dbReference>
<dbReference type="InterPro" id="IPR001452">
    <property type="entry name" value="SH3_domain"/>
</dbReference>
<dbReference type="InterPro" id="IPR029071">
    <property type="entry name" value="Ubiquitin-like_domsf"/>
</dbReference>
<dbReference type="InterPro" id="IPR051567">
    <property type="entry name" value="Unconventional_Myosin_ATPase"/>
</dbReference>
<dbReference type="PANTHER" id="PTHR22692:SF33">
    <property type="entry name" value="MYOSIN"/>
    <property type="match status" value="1"/>
</dbReference>
<dbReference type="PANTHER" id="PTHR22692">
    <property type="entry name" value="MYOSIN VII, XV"/>
    <property type="match status" value="1"/>
</dbReference>
<dbReference type="Pfam" id="PF21998">
    <property type="entry name" value="FERM_C1_MyoVII"/>
    <property type="match status" value="1"/>
</dbReference>
<dbReference type="Pfam" id="PF00373">
    <property type="entry name" value="FERM_M"/>
    <property type="match status" value="2"/>
</dbReference>
<dbReference type="Pfam" id="PF00612">
    <property type="entry name" value="IQ"/>
    <property type="match status" value="3"/>
</dbReference>
<dbReference type="Pfam" id="PF02174">
    <property type="entry name" value="IRS"/>
    <property type="match status" value="1"/>
</dbReference>
<dbReference type="Pfam" id="PF00063">
    <property type="entry name" value="Myosin_head"/>
    <property type="match status" value="1"/>
</dbReference>
<dbReference type="Pfam" id="PF24123">
    <property type="entry name" value="Myosin_VII_N"/>
    <property type="match status" value="1"/>
</dbReference>
<dbReference type="Pfam" id="PF00784">
    <property type="entry name" value="MyTH4"/>
    <property type="match status" value="2"/>
</dbReference>
<dbReference type="Pfam" id="PF21989">
    <property type="entry name" value="RA_2"/>
    <property type="match status" value="2"/>
</dbReference>
<dbReference type="PRINTS" id="PR00193">
    <property type="entry name" value="MYOSINHEAVY"/>
</dbReference>
<dbReference type="SMART" id="SM00295">
    <property type="entry name" value="B41"/>
    <property type="match status" value="2"/>
</dbReference>
<dbReference type="SMART" id="SM00015">
    <property type="entry name" value="IQ"/>
    <property type="match status" value="3"/>
</dbReference>
<dbReference type="SMART" id="SM00242">
    <property type="entry name" value="MYSc"/>
    <property type="match status" value="1"/>
</dbReference>
<dbReference type="SMART" id="SM00139">
    <property type="entry name" value="MyTH4"/>
    <property type="match status" value="2"/>
</dbReference>
<dbReference type="SUPFAM" id="SSF52540">
    <property type="entry name" value="P-loop containing nucleoside triphosphate hydrolases"/>
    <property type="match status" value="1"/>
</dbReference>
<dbReference type="SUPFAM" id="SSF50729">
    <property type="entry name" value="PH domain-like"/>
    <property type="match status" value="1"/>
</dbReference>
<dbReference type="SUPFAM" id="SSF47031">
    <property type="entry name" value="Second domain of FERM"/>
    <property type="match status" value="2"/>
</dbReference>
<dbReference type="SUPFAM" id="SSF54236">
    <property type="entry name" value="Ubiquitin-like"/>
    <property type="match status" value="2"/>
</dbReference>
<dbReference type="PROSITE" id="PS50057">
    <property type="entry name" value="FERM_3"/>
    <property type="match status" value="2"/>
</dbReference>
<dbReference type="PROSITE" id="PS50096">
    <property type="entry name" value="IQ"/>
    <property type="match status" value="3"/>
</dbReference>
<dbReference type="PROSITE" id="PS51456">
    <property type="entry name" value="MYOSIN_MOTOR"/>
    <property type="match status" value="1"/>
</dbReference>
<dbReference type="PROSITE" id="PS51016">
    <property type="entry name" value="MYTH4"/>
    <property type="match status" value="2"/>
</dbReference>
<dbReference type="PROSITE" id="PS50002">
    <property type="entry name" value="SH3"/>
    <property type="match status" value="1"/>
</dbReference>
<feature type="chain" id="PRO_0000306247" description="Unconventional myosin heavy chain 6">
    <location>
        <begin position="1"/>
        <end position="2098"/>
    </location>
</feature>
<feature type="domain" description="Myosin motor" evidence="9">
    <location>
        <begin position="62"/>
        <end position="732"/>
    </location>
</feature>
<feature type="domain" description="IQ 1" evidence="6 13">
    <location>
        <begin position="735"/>
        <end position="757"/>
    </location>
</feature>
<feature type="domain" description="IQ 2" evidence="6">
    <location>
        <begin position="758"/>
        <end position="787"/>
    </location>
</feature>
<feature type="domain" description="IQ 3" evidence="6">
    <location>
        <begin position="804"/>
        <end position="833"/>
    </location>
</feature>
<feature type="domain" description="MyTH4 1" evidence="8">
    <location>
        <begin position="929"/>
        <end position="1168"/>
    </location>
</feature>
<feature type="domain" description="Ras-associating" evidence="4">
    <location>
        <begin position="1171"/>
        <end position="1211"/>
    </location>
</feature>
<feature type="domain" description="FERM 1" evidence="5">
    <location>
        <begin position="1173"/>
        <end position="1481"/>
    </location>
</feature>
<feature type="domain" description="SH3" evidence="7">
    <location>
        <begin position="1479"/>
        <end position="1547"/>
    </location>
</feature>
<feature type="domain" description="MyTH4 2" evidence="8">
    <location>
        <begin position="1624"/>
        <end position="1772"/>
    </location>
</feature>
<feature type="domain" description="FERM 2" evidence="5">
    <location>
        <begin position="1778"/>
        <end position="2086"/>
    </location>
</feature>
<feature type="region of interest" description="Actin-binding" evidence="1">
    <location>
        <begin position="609"/>
        <end position="631"/>
    </location>
</feature>
<feature type="region of interest" description="Actin-binding" evidence="1">
    <location>
        <begin position="711"/>
        <end position="725"/>
    </location>
</feature>
<feature type="region of interest" description="Disordered" evidence="10">
    <location>
        <begin position="860"/>
        <end position="898"/>
    </location>
</feature>
<feature type="binding site" evidence="1">
    <location>
        <begin position="155"/>
        <end position="162"/>
    </location>
    <ligand>
        <name>ATP</name>
        <dbReference type="ChEBI" id="CHEBI:30616"/>
    </ligand>
</feature>
<protein>
    <recommendedName>
        <fullName>Unconventional myosin heavy chain 6</fullName>
    </recommendedName>
</protein>
<accession>P91443</accession>
<keyword id="KW-0009">Actin-binding</keyword>
<keyword id="KW-0067">ATP-binding</keyword>
<keyword id="KW-0963">Cytoplasm</keyword>
<keyword id="KW-0505">Motor protein</keyword>
<keyword id="KW-0518">Myosin</keyword>
<keyword id="KW-0547">Nucleotide-binding</keyword>
<keyword id="KW-1185">Reference proteome</keyword>
<keyword id="KW-0677">Repeat</keyword>
<keyword id="KW-0728">SH3 domain</keyword>
<name>HUM6_CAEEL</name>